<proteinExistence type="inferred from homology"/>
<evidence type="ECO:0000255" key="1">
    <source>
        <dbReference type="HAMAP-Rule" id="MF_01333"/>
    </source>
</evidence>
<evidence type="ECO:0000305" key="2"/>
<comment type="function">
    <text evidence="1">This is one of the proteins that bind and probably mediate the attachment of the 5S RNA into the large ribosomal subunit, where it forms part of the central protuberance. In the 70S ribosome it contacts protein S13 of the 30S subunit (bridge B1b), connecting the 2 subunits; this bridge is implicated in subunit movement. Contacts the P site tRNA; the 5S rRNA and some of its associated proteins might help stabilize positioning of ribosome-bound tRNAs.</text>
</comment>
<comment type="subunit">
    <text evidence="1">Part of the 50S ribosomal subunit; part of the 5S rRNA/L5/L18/L25 subcomplex. Contacts the 5S rRNA and the P site tRNA. Forms a bridge to the 30S subunit in the 70S ribosome.</text>
</comment>
<comment type="similarity">
    <text evidence="1">Belongs to the universal ribosomal protein uL5 family.</text>
</comment>
<gene>
    <name evidence="1" type="primary">rplE</name>
    <name type="ordered locus">BAV0046</name>
</gene>
<sequence>MSRLQDFYKSKVAVDLQAKFGYKSVMEVPRITKITLNMGVSEAVADKKVIEHAVSDLTKIAGQKPVITKTRKAIAGFKIRENYPIGCMVTLRGQRMYEFLDRLVAIALPRVRDFRGISGRAFDGRGNYNIGVKEQIIFPEIEYDKIDALRGLNISITTSAKTDEEAKALLTAFSFPFRN</sequence>
<dbReference type="EMBL" id="AM167904">
    <property type="protein sequence ID" value="CAJ47630.1"/>
    <property type="molecule type" value="Genomic_DNA"/>
</dbReference>
<dbReference type="RefSeq" id="WP_012415752.1">
    <property type="nucleotide sequence ID" value="NC_010645.1"/>
</dbReference>
<dbReference type="SMR" id="Q2L279"/>
<dbReference type="STRING" id="360910.BAV0046"/>
<dbReference type="GeneID" id="92936709"/>
<dbReference type="KEGG" id="bav:BAV0046"/>
<dbReference type="eggNOG" id="COG0094">
    <property type="taxonomic scope" value="Bacteria"/>
</dbReference>
<dbReference type="HOGENOM" id="CLU_061015_2_1_4"/>
<dbReference type="OrthoDB" id="9806626at2"/>
<dbReference type="Proteomes" id="UP000001977">
    <property type="component" value="Chromosome"/>
</dbReference>
<dbReference type="GO" id="GO:1990904">
    <property type="term" value="C:ribonucleoprotein complex"/>
    <property type="evidence" value="ECO:0007669"/>
    <property type="project" value="UniProtKB-KW"/>
</dbReference>
<dbReference type="GO" id="GO:0005840">
    <property type="term" value="C:ribosome"/>
    <property type="evidence" value="ECO:0007669"/>
    <property type="project" value="UniProtKB-KW"/>
</dbReference>
<dbReference type="GO" id="GO:0019843">
    <property type="term" value="F:rRNA binding"/>
    <property type="evidence" value="ECO:0007669"/>
    <property type="project" value="UniProtKB-UniRule"/>
</dbReference>
<dbReference type="GO" id="GO:0003735">
    <property type="term" value="F:structural constituent of ribosome"/>
    <property type="evidence" value="ECO:0007669"/>
    <property type="project" value="InterPro"/>
</dbReference>
<dbReference type="GO" id="GO:0000049">
    <property type="term" value="F:tRNA binding"/>
    <property type="evidence" value="ECO:0007669"/>
    <property type="project" value="UniProtKB-UniRule"/>
</dbReference>
<dbReference type="GO" id="GO:0006412">
    <property type="term" value="P:translation"/>
    <property type="evidence" value="ECO:0007669"/>
    <property type="project" value="UniProtKB-UniRule"/>
</dbReference>
<dbReference type="FunFam" id="3.30.1440.10:FF:000001">
    <property type="entry name" value="50S ribosomal protein L5"/>
    <property type="match status" value="1"/>
</dbReference>
<dbReference type="Gene3D" id="3.30.1440.10">
    <property type="match status" value="1"/>
</dbReference>
<dbReference type="HAMAP" id="MF_01333_B">
    <property type="entry name" value="Ribosomal_uL5_B"/>
    <property type="match status" value="1"/>
</dbReference>
<dbReference type="InterPro" id="IPR002132">
    <property type="entry name" value="Ribosomal_uL5"/>
</dbReference>
<dbReference type="InterPro" id="IPR020930">
    <property type="entry name" value="Ribosomal_uL5_bac-type"/>
</dbReference>
<dbReference type="InterPro" id="IPR031309">
    <property type="entry name" value="Ribosomal_uL5_C"/>
</dbReference>
<dbReference type="InterPro" id="IPR020929">
    <property type="entry name" value="Ribosomal_uL5_CS"/>
</dbReference>
<dbReference type="InterPro" id="IPR022803">
    <property type="entry name" value="Ribosomal_uL5_dom_sf"/>
</dbReference>
<dbReference type="InterPro" id="IPR031310">
    <property type="entry name" value="Ribosomal_uL5_N"/>
</dbReference>
<dbReference type="NCBIfam" id="NF000585">
    <property type="entry name" value="PRK00010.1"/>
    <property type="match status" value="1"/>
</dbReference>
<dbReference type="PANTHER" id="PTHR11994">
    <property type="entry name" value="60S RIBOSOMAL PROTEIN L11-RELATED"/>
    <property type="match status" value="1"/>
</dbReference>
<dbReference type="Pfam" id="PF00281">
    <property type="entry name" value="Ribosomal_L5"/>
    <property type="match status" value="1"/>
</dbReference>
<dbReference type="Pfam" id="PF00673">
    <property type="entry name" value="Ribosomal_L5_C"/>
    <property type="match status" value="1"/>
</dbReference>
<dbReference type="PIRSF" id="PIRSF002161">
    <property type="entry name" value="Ribosomal_L5"/>
    <property type="match status" value="1"/>
</dbReference>
<dbReference type="SUPFAM" id="SSF55282">
    <property type="entry name" value="RL5-like"/>
    <property type="match status" value="1"/>
</dbReference>
<dbReference type="PROSITE" id="PS00358">
    <property type="entry name" value="RIBOSOMAL_L5"/>
    <property type="match status" value="1"/>
</dbReference>
<name>RL5_BORA1</name>
<keyword id="KW-1185">Reference proteome</keyword>
<keyword id="KW-0687">Ribonucleoprotein</keyword>
<keyword id="KW-0689">Ribosomal protein</keyword>
<keyword id="KW-0694">RNA-binding</keyword>
<keyword id="KW-0699">rRNA-binding</keyword>
<keyword id="KW-0820">tRNA-binding</keyword>
<protein>
    <recommendedName>
        <fullName evidence="1">Large ribosomal subunit protein uL5</fullName>
    </recommendedName>
    <alternativeName>
        <fullName evidence="2">50S ribosomal protein L5</fullName>
    </alternativeName>
</protein>
<accession>Q2L279</accession>
<feature type="chain" id="PRO_0000242974" description="Large ribosomal subunit protein uL5">
    <location>
        <begin position="1"/>
        <end position="179"/>
    </location>
</feature>
<reference key="1">
    <citation type="journal article" date="2006" name="J. Bacteriol.">
        <title>Comparison of the genome sequence of the poultry pathogen Bordetella avium with those of B. bronchiseptica, B. pertussis, and B. parapertussis reveals extensive diversity in surface structures associated with host interaction.</title>
        <authorList>
            <person name="Sebaihia M."/>
            <person name="Preston A."/>
            <person name="Maskell D.J."/>
            <person name="Kuzmiak H."/>
            <person name="Connell T.D."/>
            <person name="King N.D."/>
            <person name="Orndorff P.E."/>
            <person name="Miyamoto D.M."/>
            <person name="Thomson N.R."/>
            <person name="Harris D."/>
            <person name="Goble A."/>
            <person name="Lord A."/>
            <person name="Murphy L."/>
            <person name="Quail M.A."/>
            <person name="Rutter S."/>
            <person name="Squares R."/>
            <person name="Squares S."/>
            <person name="Woodward J."/>
            <person name="Parkhill J."/>
            <person name="Temple L.M."/>
        </authorList>
    </citation>
    <scope>NUCLEOTIDE SEQUENCE [LARGE SCALE GENOMIC DNA]</scope>
    <source>
        <strain>197N</strain>
    </source>
</reference>
<organism>
    <name type="scientific">Bordetella avium (strain 197N)</name>
    <dbReference type="NCBI Taxonomy" id="360910"/>
    <lineage>
        <taxon>Bacteria</taxon>
        <taxon>Pseudomonadati</taxon>
        <taxon>Pseudomonadota</taxon>
        <taxon>Betaproteobacteria</taxon>
        <taxon>Burkholderiales</taxon>
        <taxon>Alcaligenaceae</taxon>
        <taxon>Bordetella</taxon>
    </lineage>
</organism>